<geneLocation type="plasmid">
    <name>PHS3</name>
</geneLocation>
<name>QUED_HALS3</name>
<evidence type="ECO:0000250" key="1"/>
<evidence type="ECO:0000256" key="2">
    <source>
        <dbReference type="SAM" id="MobiDB-lite"/>
    </source>
</evidence>
<evidence type="ECO:0000305" key="3"/>
<sequence length="150" mass="16234">MRSAQSKRSQSTATGERTLHIGRDRPIRISAGHRLQHHDGKCSRPHGHNYEISVEITGQLTDEGWVVDKGTVTAVVSDWDHRFLLEDGDPLVDAFREAGDGDAVVVLEQPPTAEVMGVVLERKLHDALPETVSAVSVTVAETPALTAGPN</sequence>
<protein>
    <recommendedName>
        <fullName>Probable 6-carboxy-5,6,7,8-tetrahydropterin synthase</fullName>
        <shortName>CPH4 synthase</shortName>
        <ecNumber>4.1.2.50</ecNumber>
    </recommendedName>
    <alternativeName>
        <fullName>Archaeosine biosynthesis protein QueD</fullName>
    </alternativeName>
</protein>
<dbReference type="EC" id="4.1.2.50"/>
<dbReference type="EMBL" id="AM774418">
    <property type="protein sequence ID" value="CAP15548.1"/>
    <property type="molecule type" value="Genomic_DNA"/>
</dbReference>
<dbReference type="RefSeq" id="WP_010904153.1">
    <property type="nucleotide sequence ID" value="NC_010368.1"/>
</dbReference>
<dbReference type="SMR" id="B0R9W7"/>
<dbReference type="EnsemblBacteria" id="CAP15548">
    <property type="protein sequence ID" value="CAP15548"/>
    <property type="gene ID" value="OE_5198R"/>
</dbReference>
<dbReference type="KEGG" id="hsl:OE_5198R"/>
<dbReference type="HOGENOM" id="CLU_111016_1_1_2"/>
<dbReference type="PhylomeDB" id="B0R9W7"/>
<dbReference type="UniPathway" id="UPA00391"/>
<dbReference type="Proteomes" id="UP000001321">
    <property type="component" value="Plasmid PHS3"/>
</dbReference>
<dbReference type="GO" id="GO:0070497">
    <property type="term" value="F:6-carboxytetrahydropterin synthase activity"/>
    <property type="evidence" value="ECO:0007669"/>
    <property type="project" value="UniProtKB-EC"/>
</dbReference>
<dbReference type="GO" id="GO:0046872">
    <property type="term" value="F:metal ion binding"/>
    <property type="evidence" value="ECO:0007669"/>
    <property type="project" value="UniProtKB-KW"/>
</dbReference>
<dbReference type="Gene3D" id="3.30.479.10">
    <property type="entry name" value="6-pyruvoyl tetrahydropterin synthase/QueD"/>
    <property type="match status" value="1"/>
</dbReference>
<dbReference type="InterPro" id="IPR007115">
    <property type="entry name" value="6-PTP_synth/QueD"/>
</dbReference>
<dbReference type="InterPro" id="IPR038418">
    <property type="entry name" value="6-PTP_synth/QueD_sf"/>
</dbReference>
<dbReference type="PANTHER" id="PTHR12589:SF7">
    <property type="entry name" value="6-PYRUVOYL TETRAHYDROBIOPTERIN SYNTHASE"/>
    <property type="match status" value="1"/>
</dbReference>
<dbReference type="PANTHER" id="PTHR12589">
    <property type="entry name" value="PYRUVOYL TETRAHYDROBIOPTERIN SYNTHASE"/>
    <property type="match status" value="1"/>
</dbReference>
<dbReference type="Pfam" id="PF01242">
    <property type="entry name" value="PTPS"/>
    <property type="match status" value="1"/>
</dbReference>
<dbReference type="SUPFAM" id="SSF55620">
    <property type="entry name" value="Tetrahydrobiopterin biosynthesis enzymes-like"/>
    <property type="match status" value="1"/>
</dbReference>
<keyword id="KW-0456">Lyase</keyword>
<keyword id="KW-0479">Metal-binding</keyword>
<keyword id="KW-0614">Plasmid</keyword>
<keyword id="KW-0862">Zinc</keyword>
<feature type="chain" id="PRO_0000408953" description="Probable 6-carboxy-5,6,7,8-tetrahydropterin synthase">
    <location>
        <begin position="1"/>
        <end position="150"/>
    </location>
</feature>
<feature type="region of interest" description="Disordered" evidence="2">
    <location>
        <begin position="1"/>
        <end position="22"/>
    </location>
</feature>
<feature type="compositionally biased region" description="Polar residues" evidence="2">
    <location>
        <begin position="1"/>
        <end position="15"/>
    </location>
</feature>
<feature type="active site" description="Proton acceptor" evidence="1">
    <location>
        <position position="42"/>
    </location>
</feature>
<feature type="active site" description="Charge relay system" evidence="1">
    <location>
        <position position="81"/>
    </location>
</feature>
<feature type="active site" description="Charge relay system" evidence="1">
    <location>
        <position position="141"/>
    </location>
</feature>
<feature type="binding site" evidence="1">
    <location>
        <position position="33"/>
    </location>
    <ligand>
        <name>Zn(2+)</name>
        <dbReference type="ChEBI" id="CHEBI:29105"/>
    </ligand>
</feature>
<feature type="binding site" evidence="1">
    <location>
        <position position="46"/>
    </location>
    <ligand>
        <name>Zn(2+)</name>
        <dbReference type="ChEBI" id="CHEBI:29105"/>
    </ligand>
</feature>
<feature type="binding site" evidence="1">
    <location>
        <position position="48"/>
    </location>
    <ligand>
        <name>Zn(2+)</name>
        <dbReference type="ChEBI" id="CHEBI:29105"/>
    </ligand>
</feature>
<accession>B0R9W7</accession>
<proteinExistence type="inferred from homology"/>
<reference key="1">
    <citation type="journal article" date="2008" name="Genomics">
        <title>Evolution in the laboratory: the genome of Halobacterium salinarum strain R1 compared to that of strain NRC-1.</title>
        <authorList>
            <person name="Pfeiffer F."/>
            <person name="Schuster S.C."/>
            <person name="Broicher A."/>
            <person name="Falb M."/>
            <person name="Palm P."/>
            <person name="Rodewald K."/>
            <person name="Ruepp A."/>
            <person name="Soppa J."/>
            <person name="Tittor J."/>
            <person name="Oesterhelt D."/>
        </authorList>
    </citation>
    <scope>NUCLEOTIDE SEQUENCE [LARGE SCALE GENOMIC DNA]</scope>
    <source>
        <strain>ATCC 29341 / DSM 671 / R1</strain>
    </source>
</reference>
<comment type="function">
    <text evidence="1">Catalyzes the conversion of 7,8-dihydroneopterin triphosphate (H2NTP) to 6-carboxy-5,6,7,8-tetrahydropterin (CPH4) and acetaldehyde.</text>
</comment>
<comment type="catalytic activity">
    <reaction>
        <text>7,8-dihydroneopterin 3'-triphosphate + H2O = 6-carboxy-5,6,7,8-tetrahydropterin + triphosphate + acetaldehyde + 2 H(+)</text>
        <dbReference type="Rhea" id="RHEA:27966"/>
        <dbReference type="ChEBI" id="CHEBI:15343"/>
        <dbReference type="ChEBI" id="CHEBI:15377"/>
        <dbReference type="ChEBI" id="CHEBI:15378"/>
        <dbReference type="ChEBI" id="CHEBI:18036"/>
        <dbReference type="ChEBI" id="CHEBI:58462"/>
        <dbReference type="ChEBI" id="CHEBI:61032"/>
        <dbReference type="EC" id="4.1.2.50"/>
    </reaction>
</comment>
<comment type="cofactor">
    <cofactor evidence="1">
        <name>Zn(2+)</name>
        <dbReference type="ChEBI" id="CHEBI:29105"/>
    </cofactor>
    <text evidence="1">Binds 1 zinc ion per subunit.</text>
</comment>
<comment type="pathway">
    <text>Purine metabolism; 7-cyano-7-deazaguanine biosynthesis.</text>
</comment>
<comment type="miscellaneous">
    <text evidence="1">The active site is at the interface between 2 subunits. The proton acceptor Cys is on one subunit, and the charge relay system is on the other subunit (By similarity).</text>
</comment>
<comment type="similarity">
    <text evidence="3">Belongs to the PTPS family. QueD subfamily.</text>
</comment>
<organism>
    <name type="scientific">Halobacterium salinarum (strain ATCC 29341 / DSM 671 / R1)</name>
    <dbReference type="NCBI Taxonomy" id="478009"/>
    <lineage>
        <taxon>Archaea</taxon>
        <taxon>Methanobacteriati</taxon>
        <taxon>Methanobacteriota</taxon>
        <taxon>Stenosarchaea group</taxon>
        <taxon>Halobacteria</taxon>
        <taxon>Halobacteriales</taxon>
        <taxon>Halobacteriaceae</taxon>
        <taxon>Halobacterium</taxon>
        <taxon>Halobacterium salinarum NRC-34001</taxon>
    </lineage>
</organism>
<gene>
    <name type="primary">queD</name>
    <name type="ordered locus">OE_5198R</name>
</gene>